<dbReference type="EMBL" id="CP000611">
    <property type="protein sequence ID" value="ABQ75652.1"/>
    <property type="molecule type" value="Genomic_DNA"/>
</dbReference>
<dbReference type="RefSeq" id="WP_003899710.1">
    <property type="nucleotide sequence ID" value="NZ_CP016972.1"/>
</dbReference>
<dbReference type="SMR" id="A5U9F2"/>
<dbReference type="KEGG" id="mra:MRA_3863"/>
<dbReference type="eggNOG" id="COG1511">
    <property type="taxonomic scope" value="Bacteria"/>
</dbReference>
<dbReference type="eggNOG" id="COG2409">
    <property type="taxonomic scope" value="Bacteria"/>
</dbReference>
<dbReference type="HOGENOM" id="CLU_005108_3_2_11"/>
<dbReference type="Proteomes" id="UP000001988">
    <property type="component" value="Chromosome"/>
</dbReference>
<dbReference type="GO" id="GO:0005886">
    <property type="term" value="C:plasma membrane"/>
    <property type="evidence" value="ECO:0007669"/>
    <property type="project" value="UniProtKB-SubCell"/>
</dbReference>
<dbReference type="FunFam" id="1.20.1640.10:FF:000018">
    <property type="entry name" value="Transmembrane transport protein MmpL10"/>
    <property type="match status" value="1"/>
</dbReference>
<dbReference type="FunFam" id="1.20.1640.10:FF:000020">
    <property type="entry name" value="Transmembrane transport protein MmpL10"/>
    <property type="match status" value="1"/>
</dbReference>
<dbReference type="Gene3D" id="1.20.1640.10">
    <property type="entry name" value="Multidrug efflux transporter AcrB transmembrane domain"/>
    <property type="match status" value="2"/>
</dbReference>
<dbReference type="InterPro" id="IPR004869">
    <property type="entry name" value="MMPL_dom"/>
</dbReference>
<dbReference type="InterPro" id="IPR050545">
    <property type="entry name" value="Mycobact_MmpL"/>
</dbReference>
<dbReference type="InterPro" id="IPR000731">
    <property type="entry name" value="SSD"/>
</dbReference>
<dbReference type="PANTHER" id="PTHR33406">
    <property type="entry name" value="MEMBRANE PROTEIN MJ1562-RELATED"/>
    <property type="match status" value="1"/>
</dbReference>
<dbReference type="PANTHER" id="PTHR33406:SF6">
    <property type="entry name" value="MEMBRANE PROTEIN YDGH-RELATED"/>
    <property type="match status" value="1"/>
</dbReference>
<dbReference type="Pfam" id="PF03176">
    <property type="entry name" value="MMPL"/>
    <property type="match status" value="2"/>
</dbReference>
<dbReference type="SUPFAM" id="SSF82866">
    <property type="entry name" value="Multidrug efflux transporter AcrB transmembrane domain"/>
    <property type="match status" value="2"/>
</dbReference>
<dbReference type="PROSITE" id="PS50156">
    <property type="entry name" value="SSD"/>
    <property type="match status" value="1"/>
</dbReference>
<accession>A5U9F2</accession>
<name>MMPL8_MYCTA</name>
<keyword id="KW-1003">Cell membrane</keyword>
<keyword id="KW-0472">Membrane</keyword>
<keyword id="KW-1185">Reference proteome</keyword>
<keyword id="KW-0812">Transmembrane</keyword>
<keyword id="KW-1133">Transmembrane helix</keyword>
<protein>
    <recommendedName>
        <fullName evidence="3">Probable transport protein MmpL8</fullName>
    </recommendedName>
</protein>
<feature type="chain" id="PRO_0000314684" description="Probable transport protein MmpL8">
    <location>
        <begin position="1"/>
        <end position="1089"/>
    </location>
</feature>
<feature type="transmembrane region" description="Helical" evidence="1">
    <location>
        <begin position="44"/>
        <end position="64"/>
    </location>
</feature>
<feature type="transmembrane region" description="Helical" evidence="1">
    <location>
        <begin position="222"/>
        <end position="242"/>
    </location>
</feature>
<feature type="transmembrane region" description="Helical" evidence="1">
    <location>
        <begin position="257"/>
        <end position="277"/>
    </location>
</feature>
<feature type="transmembrane region" description="Helical" evidence="1">
    <location>
        <begin position="316"/>
        <end position="336"/>
    </location>
</feature>
<feature type="transmembrane region" description="Helical" evidence="1">
    <location>
        <begin position="349"/>
        <end position="369"/>
    </location>
</feature>
<feature type="transmembrane region" description="Helical" evidence="1">
    <location>
        <begin position="400"/>
        <end position="420"/>
    </location>
</feature>
<feature type="transmembrane region" description="Helical" evidence="1">
    <location>
        <begin position="555"/>
        <end position="575"/>
    </location>
</feature>
<feature type="transmembrane region" description="Helical" evidence="1">
    <location>
        <begin position="874"/>
        <end position="894"/>
    </location>
</feature>
<feature type="transmembrane region" description="Helical" evidence="1">
    <location>
        <begin position="898"/>
        <end position="918"/>
    </location>
</feature>
<feature type="transmembrane region" description="Helical" evidence="1">
    <location>
        <begin position="930"/>
        <end position="950"/>
    </location>
</feature>
<feature type="transmembrane region" description="Helical" evidence="1">
    <location>
        <begin position="973"/>
        <end position="993"/>
    </location>
</feature>
<feature type="transmembrane region" description="Helical" evidence="1">
    <location>
        <begin position="996"/>
        <end position="1016"/>
    </location>
</feature>
<feature type="region of interest" description="Disordered" evidence="2">
    <location>
        <begin position="1"/>
        <end position="26"/>
    </location>
</feature>
<feature type="region of interest" description="Disordered" evidence="2">
    <location>
        <begin position="1056"/>
        <end position="1078"/>
    </location>
</feature>
<feature type="compositionally biased region" description="Acidic residues" evidence="2">
    <location>
        <begin position="1066"/>
        <end position="1078"/>
    </location>
</feature>
<sequence>MCDVLMQPVRTPRPSTNLRSKPLRPTGDGGVFPRLGRLIVRRPWVVIAFWVALAGLLAPTVPSLDAISQRHPVAILPSDAPVLVSTRQMTAAFREAGLQSVAVVVLSDAKGLGAADERSYKELVDALRRDTRDVVMLQDFVTTPPLRELMTSKDNQAWILPVGLPGDLGSTQSKQAYARVADIVEHQVAGSTLTANLTGPAATVADLNLTGQRDRSRIEFAITILLLVILLIIYGNPITMVLPLITIGMSVVVAQRLVAIAGLAGLGIANQSIIFMSGMMVGAGTDYAVFLISRYHDYLRQGADSDQAVKKALTSIGKVIAASAATVAITFLGMVFTQLGILKTVGPMLGISVAVVFFAAVTLLPALMVLTGRRGWIAPRRDLTRRFWRSSGVHIVRRPKTHLLASALVLVILAGCAGLARYNYDDRKTLPASVESSIGYAALDKHFPSNLIIPEYLFIQSSTDLRTPKALADLEQMVQRVSQVPGVAMVRGITRPAGRSLEQARTSWQAGEVGSKLDEGSKQIAVHTGDIDKLAGGANLMASKLGDVRAQVNRAISTVGGLIDALAYLQDLLGGNRVLGELEGAEKLIGSMRALGDTIDADASFVANNTEWASPVLGALDSSPMCTADPACASARTELQRLVTARDDGTLAKISELARQLQATRAVQTLAATVSGLRGALATVIRAMGSLGMSSPGGVRSKINLVNKGVNDLADGSRQLAEGVQLLVDQVKKMGFGLGEASAFLLAMKDTATTPAMAGFYIPPELLSYATGESVKAETMPSEYRDLLGGLNVDQLKKVAAAFISPDGHSIRYLIQTDLNPFSTAAMDQIDAITAAARGAQPNTALADAKVSVVGLPVVLKDTRDYSDHDLRLIIAMTVCIVLLILIVLLRAIVAPLYLIGSVIVSYLAALGIGVIVFQFLLGQEMHWSIPGLTFVILVAVGADYNMLLISRLREEAVLGVRSGVIRTVASTGGVITAAGLIMAASMYGLVFASLGSVVQGAFVLGTGLLLDTFLVRTVTVPAIAVLVGQANWWLPSSWRPATWWPLGRRRGRAQRTKRKPLLPKEEEEQSPPDDDDLIGLWLHDGLRL</sequence>
<reference key="1">
    <citation type="journal article" date="2008" name="PLoS ONE">
        <title>Genetic basis of virulence attenuation revealed by comparative genomic analysis of Mycobacterium tuberculosis strain H37Ra versus H37Rv.</title>
        <authorList>
            <person name="Zheng H."/>
            <person name="Lu L."/>
            <person name="Wang B."/>
            <person name="Pu S."/>
            <person name="Zhang X."/>
            <person name="Zhu G."/>
            <person name="Shi W."/>
            <person name="Zhang L."/>
            <person name="Wang H."/>
            <person name="Wang S."/>
            <person name="Zhao G."/>
            <person name="Zhang Y."/>
        </authorList>
    </citation>
    <scope>NUCLEOTIDE SEQUENCE [LARGE SCALE GENOMIC DNA]</scope>
    <source>
        <strain>ATCC 25177 / H37Ra</strain>
    </source>
</reference>
<comment type="subcellular location">
    <subcellularLocation>
        <location evidence="3">Cell membrane</location>
        <topology evidence="1">Multi-pass membrane protein</topology>
    </subcellularLocation>
</comment>
<comment type="miscellaneous">
    <text>In strain H37Ra, the sulfolipid-1 (SL-1) is not synthesized.</text>
</comment>
<comment type="similarity">
    <text evidence="3">Belongs to the resistance-nodulation-cell division (RND) (TC 2.A.6) family. MmpL subfamily.</text>
</comment>
<gene>
    <name type="primary">mmpL8</name>
    <name type="ordered locus">MRA_3863</name>
</gene>
<organism>
    <name type="scientific">Mycobacterium tuberculosis (strain ATCC 25177 / H37Ra)</name>
    <dbReference type="NCBI Taxonomy" id="419947"/>
    <lineage>
        <taxon>Bacteria</taxon>
        <taxon>Bacillati</taxon>
        <taxon>Actinomycetota</taxon>
        <taxon>Actinomycetes</taxon>
        <taxon>Mycobacteriales</taxon>
        <taxon>Mycobacteriaceae</taxon>
        <taxon>Mycobacterium</taxon>
        <taxon>Mycobacterium tuberculosis complex</taxon>
    </lineage>
</organism>
<proteinExistence type="inferred from homology"/>
<evidence type="ECO:0000255" key="1"/>
<evidence type="ECO:0000256" key="2">
    <source>
        <dbReference type="SAM" id="MobiDB-lite"/>
    </source>
</evidence>
<evidence type="ECO:0000305" key="3"/>